<dbReference type="EMBL" id="BC052102">
    <property type="protein sequence ID" value="AAH52102.1"/>
    <property type="molecule type" value="mRNA"/>
</dbReference>
<dbReference type="RefSeq" id="NP_001079720.1">
    <property type="nucleotide sequence ID" value="NM_001086251.1"/>
</dbReference>
<dbReference type="SMR" id="Q7ZZH4"/>
<dbReference type="GeneID" id="379407"/>
<dbReference type="KEGG" id="xla:379407"/>
<dbReference type="AGR" id="Xenbase:XB-GENE-971554"/>
<dbReference type="CTD" id="379407"/>
<dbReference type="Xenbase" id="XB-GENE-971554">
    <property type="gene designation" value="agr2.L"/>
</dbReference>
<dbReference type="OMA" id="LMENMIK"/>
<dbReference type="OrthoDB" id="262308at2759"/>
<dbReference type="Proteomes" id="UP000186698">
    <property type="component" value="Chromosome 6L"/>
</dbReference>
<dbReference type="Bgee" id="379407">
    <property type="expression patterns" value="Expressed in neurula embryo and 12 other cell types or tissues"/>
</dbReference>
<dbReference type="GO" id="GO:0005783">
    <property type="term" value="C:endoplasmic reticulum"/>
    <property type="evidence" value="ECO:0000318"/>
    <property type="project" value="GO_Central"/>
</dbReference>
<dbReference type="GO" id="GO:0005576">
    <property type="term" value="C:extracellular region"/>
    <property type="evidence" value="ECO:0000250"/>
    <property type="project" value="UniProtKB"/>
</dbReference>
<dbReference type="GO" id="GO:0002162">
    <property type="term" value="F:dystroglycan binding"/>
    <property type="evidence" value="ECO:0000318"/>
    <property type="project" value="GO_Central"/>
</dbReference>
<dbReference type="GO" id="GO:0042802">
    <property type="term" value="F:identical protein binding"/>
    <property type="evidence" value="ECO:0000250"/>
    <property type="project" value="UniProtKB"/>
</dbReference>
<dbReference type="GO" id="GO:0010811">
    <property type="term" value="P:positive regulation of cell-substrate adhesion"/>
    <property type="evidence" value="ECO:0000250"/>
    <property type="project" value="UniProtKB"/>
</dbReference>
<dbReference type="CDD" id="cd02960">
    <property type="entry name" value="AGR"/>
    <property type="match status" value="1"/>
</dbReference>
<dbReference type="FunFam" id="3.40.30.10:FF:000036">
    <property type="entry name" value="anterior gradient protein 2 homolog"/>
    <property type="match status" value="1"/>
</dbReference>
<dbReference type="Gene3D" id="3.40.30.10">
    <property type="entry name" value="Glutaredoxin"/>
    <property type="match status" value="1"/>
</dbReference>
<dbReference type="InterPro" id="IPR051099">
    <property type="entry name" value="AGR/TXD"/>
</dbReference>
<dbReference type="InterPro" id="IPR036249">
    <property type="entry name" value="Thioredoxin-like_sf"/>
</dbReference>
<dbReference type="PANTHER" id="PTHR15337:SF1">
    <property type="entry name" value="ANTERIOR GRADIENT PROTEIN 2 HOMOLOG"/>
    <property type="match status" value="1"/>
</dbReference>
<dbReference type="PANTHER" id="PTHR15337">
    <property type="entry name" value="ANTERIOR GRADIENT PROTEIN-RELATED"/>
    <property type="match status" value="1"/>
</dbReference>
<dbReference type="Pfam" id="PF13899">
    <property type="entry name" value="Thioredoxin_7"/>
    <property type="match status" value="1"/>
</dbReference>
<dbReference type="SUPFAM" id="SSF52833">
    <property type="entry name" value="Thioredoxin-like"/>
    <property type="match status" value="1"/>
</dbReference>
<accession>Q7ZZH4</accession>
<name>AGR2B_XENLA</name>
<proteinExistence type="evidence at transcript level"/>
<gene>
    <name type="primary">agr2-b</name>
    <name evidence="5" type="synonym">agr2</name>
</gene>
<comment type="subunit">
    <text evidence="2">Monomer and homodimer.</text>
</comment>
<comment type="subcellular location">
    <subcellularLocation>
        <location evidence="3 4">Secreted</location>
    </subcellularLocation>
    <subcellularLocation>
        <location evidence="1">Endoplasmic reticulum</location>
    </subcellularLocation>
</comment>
<comment type="similarity">
    <text evidence="3">Belongs to the AGR family.</text>
</comment>
<reference evidence="5" key="1">
    <citation type="submission" date="2003-05" db="EMBL/GenBank/DDBJ databases">
        <authorList>
            <consortium name="NIH - Xenopus Gene Collection (XGC) project"/>
        </authorList>
    </citation>
    <scope>NUCLEOTIDE SEQUENCE [LARGE SCALE MRNA]</scope>
    <source>
        <tissue evidence="5">Tail bud</tissue>
    </source>
</reference>
<keyword id="KW-0256">Endoplasmic reticulum</keyword>
<keyword id="KW-1185">Reference proteome</keyword>
<keyword id="KW-0964">Secreted</keyword>
<keyword id="KW-0732">Signal</keyword>
<evidence type="ECO:0000250" key="1">
    <source>
        <dbReference type="UniProtKB" id="O88312"/>
    </source>
</evidence>
<evidence type="ECO:0000250" key="2">
    <source>
        <dbReference type="UniProtKB" id="O95994"/>
    </source>
</evidence>
<evidence type="ECO:0000255" key="3"/>
<evidence type="ECO:0000305" key="4"/>
<evidence type="ECO:0000312" key="5">
    <source>
        <dbReference type="EMBL" id="AAH52102.1"/>
    </source>
</evidence>
<feature type="signal peptide" evidence="2">
    <location>
        <begin position="1"/>
        <end position="20"/>
    </location>
</feature>
<feature type="chain" id="PRO_0000392579" description="Anterior gradient protein 2-B" evidence="3">
    <location>
        <begin position="21"/>
        <end position="164"/>
    </location>
</feature>
<feature type="short sequence motif" description="Homodimer stabilization; interchain" evidence="2">
    <location>
        <begin position="34"/>
        <end position="43"/>
    </location>
</feature>
<feature type="short sequence motif" description="Homodimer stabilization; interchain" evidence="2">
    <location>
        <begin position="49"/>
        <end position="56"/>
    </location>
</feature>
<sequence length="164" mass="18684">MESVLKSLFVLLVATSFTLAKEIPAKVSKPQTLSRGWGDNLEWVQTYEEGLYKAKAENKPLMLINHRNDCPHSLALKKAFAEHQGIQKLAEEFILLNVVYDPTDKNLQLDGQYVPKIIFVDPSLVVRADLPGKYSNHQYTYEPADIDHLFENMKKALVLLKTEL</sequence>
<organism>
    <name type="scientific">Xenopus laevis</name>
    <name type="common">African clawed frog</name>
    <dbReference type="NCBI Taxonomy" id="8355"/>
    <lineage>
        <taxon>Eukaryota</taxon>
        <taxon>Metazoa</taxon>
        <taxon>Chordata</taxon>
        <taxon>Craniata</taxon>
        <taxon>Vertebrata</taxon>
        <taxon>Euteleostomi</taxon>
        <taxon>Amphibia</taxon>
        <taxon>Batrachia</taxon>
        <taxon>Anura</taxon>
        <taxon>Pipoidea</taxon>
        <taxon>Pipidae</taxon>
        <taxon>Xenopodinae</taxon>
        <taxon>Xenopus</taxon>
        <taxon>Xenopus</taxon>
    </lineage>
</organism>
<protein>
    <recommendedName>
        <fullName>Anterior gradient protein 2-B</fullName>
    </recommendedName>
</protein>